<name>ALLB_SALA4</name>
<gene>
    <name evidence="1" type="primary">allB</name>
    <name type="ordered locus">SeAg_B0569</name>
</gene>
<protein>
    <recommendedName>
        <fullName evidence="1">Allantoinase</fullName>
        <ecNumber evidence="1">3.5.2.5</ecNumber>
    </recommendedName>
    <alternativeName>
        <fullName evidence="1">Allantoin-utilizing enzyme</fullName>
    </alternativeName>
</protein>
<sequence length="453" mass="49887">MSFDLIIKNGTVILENEARVIDIAVQGGKIAAIGENLGEAKNVLDATGLIVSPGMVDAHTHISEPGRTHWEGYETGTRAAAKGGITTMIEMPLNQLPATVDRETIELKFDAAKGKLTIDAAQLGGLVSYNLDRLHELDEVGVVGFKCFVATCGDRGIDNDFRDVNDWQFYKGAQKLGEMDQTVLVHCENALICDELGEEAKREGRVTAHDYVASRPVFTEVEAIRRVLYLAKAAGCRLHVCHISSPEGVEEVTRARQEGQDVTCESCPHYFVLDTDQFEEIGTLAKCSPPIRDQENQKGMWEKLFNGEIDCLVSDHSPCPPEMKAGNIMQAWGGIAGLQNCMDVMFDEAVQKRGMSLPMFGKLMATNAADIFGLKHKGRIAPGKDADLVFIQPDSSYVLKNEDLEYRHKVSPYVGRTIGARITKTILRGDVIYDIEHGFPVPPKGQFILKHQQ</sequence>
<reference key="1">
    <citation type="journal article" date="2011" name="J. Bacteriol.">
        <title>Comparative genomics of 28 Salmonella enterica isolates: evidence for CRISPR-mediated adaptive sublineage evolution.</title>
        <authorList>
            <person name="Fricke W.F."/>
            <person name="Mammel M.K."/>
            <person name="McDermott P.F."/>
            <person name="Tartera C."/>
            <person name="White D.G."/>
            <person name="Leclerc J.E."/>
            <person name="Ravel J."/>
            <person name="Cebula T.A."/>
        </authorList>
    </citation>
    <scope>NUCLEOTIDE SEQUENCE [LARGE SCALE GENOMIC DNA]</scope>
    <source>
        <strain>SL483</strain>
    </source>
</reference>
<evidence type="ECO:0000255" key="1">
    <source>
        <dbReference type="HAMAP-Rule" id="MF_01645"/>
    </source>
</evidence>
<feature type="chain" id="PRO_1000186926" description="Allantoinase">
    <location>
        <begin position="1"/>
        <end position="453"/>
    </location>
</feature>
<feature type="binding site" evidence="1">
    <location>
        <position position="59"/>
    </location>
    <ligand>
        <name>Zn(2+)</name>
        <dbReference type="ChEBI" id="CHEBI:29105"/>
        <label>1</label>
    </ligand>
</feature>
<feature type="binding site" evidence="1">
    <location>
        <position position="61"/>
    </location>
    <ligand>
        <name>Zn(2+)</name>
        <dbReference type="ChEBI" id="CHEBI:29105"/>
        <label>1</label>
    </ligand>
</feature>
<feature type="binding site" description="via carbamate group" evidence="1">
    <location>
        <position position="146"/>
    </location>
    <ligand>
        <name>Zn(2+)</name>
        <dbReference type="ChEBI" id="CHEBI:29105"/>
        <label>1</label>
    </ligand>
</feature>
<feature type="binding site" description="via carbamate group" evidence="1">
    <location>
        <position position="146"/>
    </location>
    <ligand>
        <name>Zn(2+)</name>
        <dbReference type="ChEBI" id="CHEBI:29105"/>
        <label>2</label>
    </ligand>
</feature>
<feature type="binding site" evidence="1">
    <location>
        <position position="186"/>
    </location>
    <ligand>
        <name>Zn(2+)</name>
        <dbReference type="ChEBI" id="CHEBI:29105"/>
        <label>2</label>
    </ligand>
</feature>
<feature type="binding site" evidence="1">
    <location>
        <position position="242"/>
    </location>
    <ligand>
        <name>Zn(2+)</name>
        <dbReference type="ChEBI" id="CHEBI:29105"/>
        <label>2</label>
    </ligand>
</feature>
<feature type="binding site" evidence="1">
    <location>
        <position position="315"/>
    </location>
    <ligand>
        <name>Zn(2+)</name>
        <dbReference type="ChEBI" id="CHEBI:29105"/>
        <label>1</label>
    </ligand>
</feature>
<feature type="modified residue" description="N6-carboxylysine" evidence="1">
    <location>
        <position position="146"/>
    </location>
</feature>
<organism>
    <name type="scientific">Salmonella agona (strain SL483)</name>
    <dbReference type="NCBI Taxonomy" id="454166"/>
    <lineage>
        <taxon>Bacteria</taxon>
        <taxon>Pseudomonadati</taxon>
        <taxon>Pseudomonadota</taxon>
        <taxon>Gammaproteobacteria</taxon>
        <taxon>Enterobacterales</taxon>
        <taxon>Enterobacteriaceae</taxon>
        <taxon>Salmonella</taxon>
    </lineage>
</organism>
<comment type="function">
    <text evidence="1">Catalyzes the conversion of allantoin (5-ureidohydantoin) to allantoic acid by hydrolytic cleavage of the five-member hydantoin ring.</text>
</comment>
<comment type="catalytic activity">
    <reaction evidence="1">
        <text>(S)-allantoin + H2O = allantoate + H(+)</text>
        <dbReference type="Rhea" id="RHEA:17029"/>
        <dbReference type="ChEBI" id="CHEBI:15377"/>
        <dbReference type="ChEBI" id="CHEBI:15378"/>
        <dbReference type="ChEBI" id="CHEBI:15678"/>
        <dbReference type="ChEBI" id="CHEBI:17536"/>
        <dbReference type="EC" id="3.5.2.5"/>
    </reaction>
</comment>
<comment type="cofactor">
    <cofactor evidence="1">
        <name>Zn(2+)</name>
        <dbReference type="ChEBI" id="CHEBI:29105"/>
    </cofactor>
    <text evidence="1">Binds 2 Zn(2+) ions per subunit.</text>
</comment>
<comment type="pathway">
    <text evidence="1">Nitrogen metabolism; (S)-allantoin degradation; allantoate from (S)-allantoin: step 1/1.</text>
</comment>
<comment type="subunit">
    <text evidence="1">Homotetramer.</text>
</comment>
<comment type="PTM">
    <text evidence="1">Carboxylation allows a single lysine to coordinate two zinc ions.</text>
</comment>
<comment type="similarity">
    <text evidence="1">Belongs to the metallo-dependent hydrolases superfamily. Allantoinase family.</text>
</comment>
<dbReference type="EC" id="3.5.2.5" evidence="1"/>
<dbReference type="EMBL" id="CP001138">
    <property type="protein sequence ID" value="ACH51150.1"/>
    <property type="molecule type" value="Genomic_DNA"/>
</dbReference>
<dbReference type="RefSeq" id="WP_000006865.1">
    <property type="nucleotide sequence ID" value="NC_011149.1"/>
</dbReference>
<dbReference type="SMR" id="B5EYC3"/>
<dbReference type="KEGG" id="sea:SeAg_B0569"/>
<dbReference type="HOGENOM" id="CLU_015572_4_2_6"/>
<dbReference type="UniPathway" id="UPA00395">
    <property type="reaction ID" value="UER00653"/>
</dbReference>
<dbReference type="Proteomes" id="UP000008819">
    <property type="component" value="Chromosome"/>
</dbReference>
<dbReference type="GO" id="GO:0005737">
    <property type="term" value="C:cytoplasm"/>
    <property type="evidence" value="ECO:0007669"/>
    <property type="project" value="TreeGrafter"/>
</dbReference>
<dbReference type="GO" id="GO:0004038">
    <property type="term" value="F:allantoinase activity"/>
    <property type="evidence" value="ECO:0007669"/>
    <property type="project" value="UniProtKB-UniRule"/>
</dbReference>
<dbReference type="GO" id="GO:0050897">
    <property type="term" value="F:cobalt ion binding"/>
    <property type="evidence" value="ECO:0007669"/>
    <property type="project" value="InterPro"/>
</dbReference>
<dbReference type="GO" id="GO:0008270">
    <property type="term" value="F:zinc ion binding"/>
    <property type="evidence" value="ECO:0007669"/>
    <property type="project" value="InterPro"/>
</dbReference>
<dbReference type="GO" id="GO:0000256">
    <property type="term" value="P:allantoin catabolic process"/>
    <property type="evidence" value="ECO:0007669"/>
    <property type="project" value="UniProtKB-UniRule"/>
</dbReference>
<dbReference type="GO" id="GO:0006145">
    <property type="term" value="P:purine nucleobase catabolic process"/>
    <property type="evidence" value="ECO:0007669"/>
    <property type="project" value="TreeGrafter"/>
</dbReference>
<dbReference type="CDD" id="cd01315">
    <property type="entry name" value="L-HYD_ALN"/>
    <property type="match status" value="1"/>
</dbReference>
<dbReference type="FunFam" id="3.20.20.140:FF:000013">
    <property type="entry name" value="Allantoinase"/>
    <property type="match status" value="1"/>
</dbReference>
<dbReference type="Gene3D" id="3.20.20.140">
    <property type="entry name" value="Metal-dependent hydrolases"/>
    <property type="match status" value="1"/>
</dbReference>
<dbReference type="HAMAP" id="MF_01645">
    <property type="entry name" value="Hydantoinase"/>
    <property type="match status" value="1"/>
</dbReference>
<dbReference type="InterPro" id="IPR017593">
    <property type="entry name" value="Allantoinase"/>
</dbReference>
<dbReference type="InterPro" id="IPR047604">
    <property type="entry name" value="Allantoinase_bact"/>
</dbReference>
<dbReference type="InterPro" id="IPR006680">
    <property type="entry name" value="Amidohydro-rel"/>
</dbReference>
<dbReference type="InterPro" id="IPR050138">
    <property type="entry name" value="DHOase/Allantoinase_Hydrolase"/>
</dbReference>
<dbReference type="InterPro" id="IPR011059">
    <property type="entry name" value="Metal-dep_hydrolase_composite"/>
</dbReference>
<dbReference type="InterPro" id="IPR032466">
    <property type="entry name" value="Metal_Hydrolase"/>
</dbReference>
<dbReference type="NCBIfam" id="TIGR03178">
    <property type="entry name" value="allantoinase"/>
    <property type="match status" value="1"/>
</dbReference>
<dbReference type="NCBIfam" id="NF005960">
    <property type="entry name" value="PRK08044.1"/>
    <property type="match status" value="1"/>
</dbReference>
<dbReference type="PANTHER" id="PTHR43668">
    <property type="entry name" value="ALLANTOINASE"/>
    <property type="match status" value="1"/>
</dbReference>
<dbReference type="PANTHER" id="PTHR43668:SF4">
    <property type="entry name" value="ALLANTOINASE"/>
    <property type="match status" value="1"/>
</dbReference>
<dbReference type="Pfam" id="PF01979">
    <property type="entry name" value="Amidohydro_1"/>
    <property type="match status" value="1"/>
</dbReference>
<dbReference type="SUPFAM" id="SSF51338">
    <property type="entry name" value="Composite domain of metallo-dependent hydrolases"/>
    <property type="match status" value="1"/>
</dbReference>
<dbReference type="SUPFAM" id="SSF51556">
    <property type="entry name" value="Metallo-dependent hydrolases"/>
    <property type="match status" value="1"/>
</dbReference>
<accession>B5EYC3</accession>
<keyword id="KW-0378">Hydrolase</keyword>
<keyword id="KW-0479">Metal-binding</keyword>
<keyword id="KW-0659">Purine metabolism</keyword>
<keyword id="KW-0862">Zinc</keyword>
<proteinExistence type="inferred from homology"/>